<organism>
    <name type="scientific">Latilactobacillus sakei subsp. sakei (strain 23K)</name>
    <name type="common">Lactobacillus sakei subsp. sakei</name>
    <dbReference type="NCBI Taxonomy" id="314315"/>
    <lineage>
        <taxon>Bacteria</taxon>
        <taxon>Bacillati</taxon>
        <taxon>Bacillota</taxon>
        <taxon>Bacilli</taxon>
        <taxon>Lactobacillales</taxon>
        <taxon>Lactobacillaceae</taxon>
        <taxon>Latilactobacillus</taxon>
    </lineage>
</organism>
<gene>
    <name evidence="1" type="primary">atpC</name>
    <name type="ordered locus">LCA_1125</name>
</gene>
<reference key="1">
    <citation type="journal article" date="2005" name="Nat. Biotechnol.">
        <title>The complete genome sequence of the meat-borne lactic acid bacterium Lactobacillus sakei 23K.</title>
        <authorList>
            <person name="Chaillou S."/>
            <person name="Champomier-Verges M.-C."/>
            <person name="Cornet M."/>
            <person name="Crutz-Le Coq A.-M."/>
            <person name="Dudez A.-M."/>
            <person name="Martin V."/>
            <person name="Beaufils S."/>
            <person name="Darbon-Rongere E."/>
            <person name="Bossy R."/>
            <person name="Loux V."/>
            <person name="Zagorec M."/>
        </authorList>
    </citation>
    <scope>NUCLEOTIDE SEQUENCE [LARGE SCALE GENOMIC DNA]</scope>
    <source>
        <strain>23K</strain>
    </source>
</reference>
<keyword id="KW-0066">ATP synthesis</keyword>
<keyword id="KW-1003">Cell membrane</keyword>
<keyword id="KW-0139">CF(1)</keyword>
<keyword id="KW-0375">Hydrogen ion transport</keyword>
<keyword id="KW-0406">Ion transport</keyword>
<keyword id="KW-0472">Membrane</keyword>
<keyword id="KW-1185">Reference proteome</keyword>
<keyword id="KW-0813">Transport</keyword>
<evidence type="ECO:0000255" key="1">
    <source>
        <dbReference type="HAMAP-Rule" id="MF_00530"/>
    </source>
</evidence>
<evidence type="ECO:0000256" key="2">
    <source>
        <dbReference type="SAM" id="MobiDB-lite"/>
    </source>
</evidence>
<accession>Q38WK6</accession>
<proteinExistence type="inferred from homology"/>
<sequence length="145" mass="15962">MMAEEQKVLTVNIVTPDGVVYDHHASMLVVPAMAGQLGIMANHEPIITPLEIGEIRVKRTDNPGHEDAIAITGGFMEVSHNIASIVADGAERARDINLSRAQRAKQRAEDAIKTASEKHDSDELRRAQIALQRAMNRIDVKNHLQ</sequence>
<protein>
    <recommendedName>
        <fullName evidence="1">ATP synthase epsilon chain</fullName>
    </recommendedName>
    <alternativeName>
        <fullName evidence="1">ATP synthase F1 sector epsilon subunit</fullName>
    </alternativeName>
    <alternativeName>
        <fullName evidence="1">F-ATPase epsilon subunit</fullName>
    </alternativeName>
</protein>
<comment type="function">
    <text evidence="1">Produces ATP from ADP in the presence of a proton gradient across the membrane.</text>
</comment>
<comment type="subunit">
    <text>F-type ATPases have 2 components, CF(1) - the catalytic core - and CF(0) - the membrane proton channel. CF(1) has five subunits: alpha(3), beta(3), gamma(1), delta(1), epsilon(1). CF(0) has three main subunits: a, b and c.</text>
</comment>
<comment type="subcellular location">
    <subcellularLocation>
        <location evidence="1">Cell membrane</location>
        <topology evidence="1">Peripheral membrane protein</topology>
    </subcellularLocation>
</comment>
<comment type="similarity">
    <text evidence="1">Belongs to the ATPase epsilon chain family.</text>
</comment>
<dbReference type="EMBL" id="CR936503">
    <property type="protein sequence ID" value="CAI55426.1"/>
    <property type="molecule type" value="Genomic_DNA"/>
</dbReference>
<dbReference type="SMR" id="Q38WK6"/>
<dbReference type="STRING" id="314315.LCA_1125"/>
<dbReference type="KEGG" id="lsa:LCA_1125"/>
<dbReference type="eggNOG" id="COG0355">
    <property type="taxonomic scope" value="Bacteria"/>
</dbReference>
<dbReference type="HOGENOM" id="CLU_084338_1_0_9"/>
<dbReference type="OrthoDB" id="9804110at2"/>
<dbReference type="Proteomes" id="UP000002707">
    <property type="component" value="Chromosome"/>
</dbReference>
<dbReference type="GO" id="GO:0005886">
    <property type="term" value="C:plasma membrane"/>
    <property type="evidence" value="ECO:0007669"/>
    <property type="project" value="UniProtKB-SubCell"/>
</dbReference>
<dbReference type="GO" id="GO:0045259">
    <property type="term" value="C:proton-transporting ATP synthase complex"/>
    <property type="evidence" value="ECO:0007669"/>
    <property type="project" value="UniProtKB-KW"/>
</dbReference>
<dbReference type="GO" id="GO:0005524">
    <property type="term" value="F:ATP binding"/>
    <property type="evidence" value="ECO:0007669"/>
    <property type="project" value="UniProtKB-UniRule"/>
</dbReference>
<dbReference type="GO" id="GO:0046933">
    <property type="term" value="F:proton-transporting ATP synthase activity, rotational mechanism"/>
    <property type="evidence" value="ECO:0007669"/>
    <property type="project" value="UniProtKB-UniRule"/>
</dbReference>
<dbReference type="CDD" id="cd12152">
    <property type="entry name" value="F1-ATPase_delta"/>
    <property type="match status" value="1"/>
</dbReference>
<dbReference type="FunFam" id="1.20.5.440:FF:000001">
    <property type="entry name" value="ATP synthase epsilon chain"/>
    <property type="match status" value="1"/>
</dbReference>
<dbReference type="Gene3D" id="1.20.5.440">
    <property type="entry name" value="ATP synthase delta/epsilon subunit, C-terminal domain"/>
    <property type="match status" value="1"/>
</dbReference>
<dbReference type="Gene3D" id="2.60.15.10">
    <property type="entry name" value="F0F1 ATP synthase delta/epsilon subunit, N-terminal"/>
    <property type="match status" value="1"/>
</dbReference>
<dbReference type="HAMAP" id="MF_00530">
    <property type="entry name" value="ATP_synth_epsil_bac"/>
    <property type="match status" value="1"/>
</dbReference>
<dbReference type="InterPro" id="IPR036794">
    <property type="entry name" value="ATP_F1_dsu/esu_C_sf"/>
</dbReference>
<dbReference type="InterPro" id="IPR001469">
    <property type="entry name" value="ATP_synth_F1_dsu/esu"/>
</dbReference>
<dbReference type="InterPro" id="IPR020546">
    <property type="entry name" value="ATP_synth_F1_dsu/esu_N"/>
</dbReference>
<dbReference type="InterPro" id="IPR020547">
    <property type="entry name" value="ATP_synth_F1_esu_C"/>
</dbReference>
<dbReference type="InterPro" id="IPR036771">
    <property type="entry name" value="ATPsynth_dsu/esu_N"/>
</dbReference>
<dbReference type="NCBIfam" id="TIGR01216">
    <property type="entry name" value="ATP_synt_epsi"/>
    <property type="match status" value="1"/>
</dbReference>
<dbReference type="NCBIfam" id="NF001846">
    <property type="entry name" value="PRK00571.1-3"/>
    <property type="match status" value="1"/>
</dbReference>
<dbReference type="PANTHER" id="PTHR13822">
    <property type="entry name" value="ATP SYNTHASE DELTA/EPSILON CHAIN"/>
    <property type="match status" value="1"/>
</dbReference>
<dbReference type="PANTHER" id="PTHR13822:SF10">
    <property type="entry name" value="ATP SYNTHASE EPSILON CHAIN, CHLOROPLASTIC"/>
    <property type="match status" value="1"/>
</dbReference>
<dbReference type="Pfam" id="PF00401">
    <property type="entry name" value="ATP-synt_DE"/>
    <property type="match status" value="1"/>
</dbReference>
<dbReference type="Pfam" id="PF02823">
    <property type="entry name" value="ATP-synt_DE_N"/>
    <property type="match status" value="1"/>
</dbReference>
<dbReference type="SUPFAM" id="SSF46604">
    <property type="entry name" value="Epsilon subunit of F1F0-ATP synthase C-terminal domain"/>
    <property type="match status" value="1"/>
</dbReference>
<dbReference type="SUPFAM" id="SSF51344">
    <property type="entry name" value="Epsilon subunit of F1F0-ATP synthase N-terminal domain"/>
    <property type="match status" value="1"/>
</dbReference>
<feature type="chain" id="PRO_0000265829" description="ATP synthase epsilon chain">
    <location>
        <begin position="1"/>
        <end position="145"/>
    </location>
</feature>
<feature type="region of interest" description="Disordered" evidence="2">
    <location>
        <begin position="100"/>
        <end position="123"/>
    </location>
</feature>
<feature type="compositionally biased region" description="Basic and acidic residues" evidence="2">
    <location>
        <begin position="106"/>
        <end position="123"/>
    </location>
</feature>
<name>ATPE_LATSS</name>